<sequence>MYIKQVIIQGFRSYRDQTIVDPFSSKHNVIVGRNGSGKSNFFYAIQFVLSDEFSHLRPEQRLALLHEGTGPRVISAFVEIIFDNSDNRLPIDKEEVSLRRVIGAKKDQYFLDKKMVTKNDVMNLLESAGFSRSNPYYIVKQGKINQMATAPDSQRLKLLREVAGTRVYDERKEESISLMKETEGKREKINELLKYIEERLHTLEEEKEELAQYQKWDKMRRALEYTIYNQELNETRAKLDELSAKRETSGEKSRQLRDAQQDARDKMEDIERQVRELKTKISAMKEEKEQLSAERQEQIKQRTKLELKAKDLQDELAGNSEQRKRLLKERQKLLEKIEEKQKELAETEPKFNSVKEKEERGIARLAQATQERTDLYAKQGRGSQFTSKEERDKWIKKELKSLDQAINDKKRQIAAIHKDLEDTEANKEKNLEQYNKLDQDLNEVKARVEELDRKYYEVKNKKDELQSERNYLWREENAEQQALAAKREDLEKKQQLLRAATGKAILNGIDSINKVLEHFRRKGINQHVQNGYHGIVMNNFECEPAFYTCVEVTAGNRLFYHIVDSDEVSTKILMEFNKMNLPGEVTFLPLNKLDVRDTAYPETNDAIPMISKLRYNPRFDKAFKHVFGKTLICRSMEVSTQLARAFTMDCITLEGDQVSHRGALTGGYYDTRKSRLELQKDVRKAEEELGELEAKLNENLRRNIERINNEIDQLMNQMQQIETQQRKFKASRDSILSEMKMLKEKRQQSEKTFMPKQRSLQSLEASLHAMESTRESLKAELGTDLLSQLSLEDQKRVDALNDEIRQLQQENRQLLNERIKLEGIITRVETYLNENLRKRLDQVEQELNELRETEGGTVLTATTSELEAINKRVKDTMARSEDLDNSIDKTEAGIKELQKSMERWKNMEKEHMDAINHDTKELEKMTNRQGMLLKKKEECMKKIRELGSLPQEAFEKYQTLSLKQLFRKLEQCNTELKKYSHVNKKALDQFVNFSEQKEKLIKRQEELDRGYKSIMELMNVLELRKYEAIQLTFKQVSKNFSEVFQKLVPGGKATLVMKKGDVEGSQSQDEGEGSGESERGSGSQSSVPSVDQFTGVGIRVSFTGKQGEMREMQQLSGGQKSLVALALIFAIQKCDPAPFYLFDEIDQALDAQHRKAVSDMIMELAVHAQFITTTFRPELLESADKFYGVKFRNKVSHIDVITAEMAKDFVEDDTTHG</sequence>
<feature type="chain" id="PRO_0000119002" description="Structural maintenance of chromosomes protein 3">
    <location>
        <begin position="1"/>
        <end position="1217"/>
    </location>
</feature>
<feature type="domain" description="SMC hinge">
    <location>
        <begin position="530"/>
        <end position="642"/>
    </location>
</feature>
<feature type="region of interest" description="Disordered" evidence="5">
    <location>
        <begin position="242"/>
        <end position="268"/>
    </location>
</feature>
<feature type="region of interest" description="Disordered" evidence="5">
    <location>
        <begin position="1059"/>
        <end position="1090"/>
    </location>
</feature>
<feature type="coiled-coil region" evidence="4">
    <location>
        <begin position="179"/>
        <end position="350"/>
    </location>
</feature>
<feature type="coiled-coil region" evidence="4">
    <location>
        <begin position="393"/>
        <end position="503"/>
    </location>
</feature>
<feature type="coiled-coil region" evidence="4">
    <location>
        <begin position="669"/>
        <end position="916"/>
    </location>
</feature>
<feature type="coiled-coil region" evidence="4">
    <location>
        <begin position="958"/>
        <end position="989"/>
    </location>
</feature>
<feature type="binding site" evidence="4">
    <location>
        <begin position="32"/>
        <end position="39"/>
    </location>
    <ligand>
        <name>ATP</name>
        <dbReference type="ChEBI" id="CHEBI:30616"/>
    </ligand>
</feature>
<feature type="modified residue" description="N6-acetyllysine" evidence="17">
    <location>
        <position position="105"/>
    </location>
</feature>
<feature type="modified residue" description="N6-acetyllysine" evidence="17">
    <location>
        <position position="106"/>
    </location>
</feature>
<feature type="modified residue" description="N6-acetyllysine" evidence="3">
    <location>
        <position position="140"/>
    </location>
</feature>
<feature type="modified residue" description="Phosphothreonine" evidence="3">
    <location>
        <position position="783"/>
    </location>
</feature>
<feature type="modified residue" description="Phosphoserine" evidence="15">
    <location>
        <position position="787"/>
    </location>
</feature>
<feature type="modified residue" description="Phosphoserine" evidence="3">
    <location>
        <position position="886"/>
    </location>
</feature>
<feature type="modified residue" description="Phosphoserine" evidence="10">
    <location>
        <position position="1013"/>
    </location>
</feature>
<feature type="modified residue" description="Phosphoserine" evidence="3">
    <location>
        <position position="1065"/>
    </location>
</feature>
<feature type="modified residue" description="Phosphoserine" evidence="16">
    <location>
        <position position="1067"/>
    </location>
</feature>
<feature type="modified residue" description="Phosphoserine" evidence="2">
    <location>
        <position position="1074"/>
    </location>
</feature>
<feature type="modified residue" description="Phosphoserine" evidence="11">
    <location>
        <position position="1083"/>
    </location>
</feature>
<feature type="modified residue" description="N6-acetyllysine" evidence="3">
    <location>
        <position position="1190"/>
    </location>
</feature>
<feature type="mutagenesis site" description="Abolishes interaction with MXI1." evidence="13">
    <original>L</original>
    <variation>P</variation>
    <location>
        <position position="807"/>
    </location>
</feature>
<feature type="sequence conflict" description="In Ref. 3; CAA75400." evidence="14" ref="3">
    <original>K</original>
    <variation>R</variation>
    <location>
        <position position="999"/>
    </location>
</feature>
<feature type="sequence conflict" description="In Ref. 3." evidence="14" ref="3">
    <original>F</original>
    <variation>L</variation>
    <location>
        <position position="1175"/>
    </location>
</feature>
<feature type="helix" evidence="19">
    <location>
        <begin position="495"/>
        <end position="499"/>
    </location>
</feature>
<feature type="helix" evidence="19">
    <location>
        <begin position="503"/>
        <end position="521"/>
    </location>
</feature>
<feature type="helix" evidence="19">
    <location>
        <begin position="526"/>
        <end position="530"/>
    </location>
</feature>
<feature type="strand" evidence="19">
    <location>
        <begin position="532"/>
        <end position="535"/>
    </location>
</feature>
<feature type="helix" evidence="19">
    <location>
        <begin position="536"/>
        <end position="538"/>
    </location>
</feature>
<feature type="strand" evidence="18">
    <location>
        <begin position="539"/>
        <end position="541"/>
    </location>
</feature>
<feature type="helix" evidence="19">
    <location>
        <begin position="544"/>
        <end position="546"/>
    </location>
</feature>
<feature type="helix" evidence="19">
    <location>
        <begin position="547"/>
        <end position="554"/>
    </location>
</feature>
<feature type="helix" evidence="19">
    <location>
        <begin position="555"/>
        <end position="559"/>
    </location>
</feature>
<feature type="strand" evidence="19">
    <location>
        <begin position="561"/>
        <end position="564"/>
    </location>
</feature>
<feature type="helix" evidence="19">
    <location>
        <begin position="566"/>
        <end position="578"/>
    </location>
</feature>
<feature type="strand" evidence="19">
    <location>
        <begin position="585"/>
        <end position="589"/>
    </location>
</feature>
<feature type="turn" evidence="19">
    <location>
        <begin position="590"/>
        <end position="592"/>
    </location>
</feature>
<feature type="strand" evidence="19">
    <location>
        <begin position="606"/>
        <end position="609"/>
    </location>
</feature>
<feature type="helix" evidence="19">
    <location>
        <begin position="610"/>
        <end position="612"/>
    </location>
</feature>
<feature type="helix" evidence="19">
    <location>
        <begin position="617"/>
        <end position="619"/>
    </location>
</feature>
<feature type="helix" evidence="19">
    <location>
        <begin position="620"/>
        <end position="627"/>
    </location>
</feature>
<feature type="strand" evidence="19">
    <location>
        <begin position="630"/>
        <end position="634"/>
    </location>
</feature>
<feature type="helix" evidence="19">
    <location>
        <begin position="636"/>
        <end position="645"/>
    </location>
</feature>
<feature type="strand" evidence="19">
    <location>
        <begin position="649"/>
        <end position="652"/>
    </location>
</feature>
<feature type="strand" evidence="19">
    <location>
        <begin position="664"/>
        <end position="666"/>
    </location>
</feature>
<feature type="helix" evidence="19">
    <location>
        <begin position="675"/>
        <end position="682"/>
    </location>
</feature>
<proteinExistence type="evidence at protein level"/>
<name>SMC3_MOUSE</name>
<reference key="1">
    <citation type="journal article" date="1999" name="J. Biol. Chem.">
        <title>Complete cDNA cloning, genomic organization, chromosomal assignment, functional characterization of the promoter, and expression of the murine Bamacan gene.</title>
        <authorList>
            <person name="Ghiselli G."/>
            <person name="Siracusa L.D."/>
            <person name="Iozzo R.V."/>
        </authorList>
    </citation>
    <scope>NUCLEOTIDE SEQUENCE [MRNA]</scope>
    <scope>TISSUE SPECIFICITY</scope>
</reference>
<reference key="2">
    <citation type="journal article" date="1999" name="Gene">
        <title>Characterization of the components of the putative mammalian sister chromatid cohesion complex.</title>
        <authorList>
            <person name="Darwiche N."/>
            <person name="Freeman L.A."/>
            <person name="Strunnikov A."/>
        </authorList>
    </citation>
    <scope>NUCLEOTIDE SEQUENCE [MRNA]</scope>
    <scope>FUNCTION</scope>
    <scope>IDENTIFICATION IN A COHESIN COMPLEX WITH SMC1A AND RAD21</scope>
</reference>
<reference key="3">
    <citation type="journal article" date="1998" name="Oncogene">
        <title>Mmip1: a novel leucine zipper protein that reverses the suppressive effects of mad family members on C-myc.</title>
        <authorList>
            <person name="Gupta K."/>
            <person name="Anand G."/>
            <person name="Yin X.Y."/>
            <person name="Prochownik E.V."/>
        </authorList>
    </citation>
    <scope>NUCLEOTIDE SEQUENCE [MRNA] OF 478-1217</scope>
    <scope>INTERACTION WITH MXI1; MXD3 AND MXD4</scope>
    <scope>MUTAGENESIS OF LEU-807</scope>
    <source>
        <tissue>Embryo</tissue>
    </source>
</reference>
<reference key="4">
    <citation type="journal article" date="2005" name="Science">
        <title>The transcriptional landscape of the mammalian genome.</title>
        <authorList>
            <person name="Carninci P."/>
            <person name="Kasukawa T."/>
            <person name="Katayama S."/>
            <person name="Gough J."/>
            <person name="Frith M.C."/>
            <person name="Maeda N."/>
            <person name="Oyama R."/>
            <person name="Ravasi T."/>
            <person name="Lenhard B."/>
            <person name="Wells C."/>
            <person name="Kodzius R."/>
            <person name="Shimokawa K."/>
            <person name="Bajic V.B."/>
            <person name="Brenner S.E."/>
            <person name="Batalov S."/>
            <person name="Forrest A.R."/>
            <person name="Zavolan M."/>
            <person name="Davis M.J."/>
            <person name="Wilming L.G."/>
            <person name="Aidinis V."/>
            <person name="Allen J.E."/>
            <person name="Ambesi-Impiombato A."/>
            <person name="Apweiler R."/>
            <person name="Aturaliya R.N."/>
            <person name="Bailey T.L."/>
            <person name="Bansal M."/>
            <person name="Baxter L."/>
            <person name="Beisel K.W."/>
            <person name="Bersano T."/>
            <person name="Bono H."/>
            <person name="Chalk A.M."/>
            <person name="Chiu K.P."/>
            <person name="Choudhary V."/>
            <person name="Christoffels A."/>
            <person name="Clutterbuck D.R."/>
            <person name="Crowe M.L."/>
            <person name="Dalla E."/>
            <person name="Dalrymple B.P."/>
            <person name="de Bono B."/>
            <person name="Della Gatta G."/>
            <person name="di Bernardo D."/>
            <person name="Down T."/>
            <person name="Engstrom P."/>
            <person name="Fagiolini M."/>
            <person name="Faulkner G."/>
            <person name="Fletcher C.F."/>
            <person name="Fukushima T."/>
            <person name="Furuno M."/>
            <person name="Futaki S."/>
            <person name="Gariboldi M."/>
            <person name="Georgii-Hemming P."/>
            <person name="Gingeras T.R."/>
            <person name="Gojobori T."/>
            <person name="Green R.E."/>
            <person name="Gustincich S."/>
            <person name="Harbers M."/>
            <person name="Hayashi Y."/>
            <person name="Hensch T.K."/>
            <person name="Hirokawa N."/>
            <person name="Hill D."/>
            <person name="Huminiecki L."/>
            <person name="Iacono M."/>
            <person name="Ikeo K."/>
            <person name="Iwama A."/>
            <person name="Ishikawa T."/>
            <person name="Jakt M."/>
            <person name="Kanapin A."/>
            <person name="Katoh M."/>
            <person name="Kawasawa Y."/>
            <person name="Kelso J."/>
            <person name="Kitamura H."/>
            <person name="Kitano H."/>
            <person name="Kollias G."/>
            <person name="Krishnan S.P."/>
            <person name="Kruger A."/>
            <person name="Kummerfeld S.K."/>
            <person name="Kurochkin I.V."/>
            <person name="Lareau L.F."/>
            <person name="Lazarevic D."/>
            <person name="Lipovich L."/>
            <person name="Liu J."/>
            <person name="Liuni S."/>
            <person name="McWilliam S."/>
            <person name="Madan Babu M."/>
            <person name="Madera M."/>
            <person name="Marchionni L."/>
            <person name="Matsuda H."/>
            <person name="Matsuzawa S."/>
            <person name="Miki H."/>
            <person name="Mignone F."/>
            <person name="Miyake S."/>
            <person name="Morris K."/>
            <person name="Mottagui-Tabar S."/>
            <person name="Mulder N."/>
            <person name="Nakano N."/>
            <person name="Nakauchi H."/>
            <person name="Ng P."/>
            <person name="Nilsson R."/>
            <person name="Nishiguchi S."/>
            <person name="Nishikawa S."/>
            <person name="Nori F."/>
            <person name="Ohara O."/>
            <person name="Okazaki Y."/>
            <person name="Orlando V."/>
            <person name="Pang K.C."/>
            <person name="Pavan W.J."/>
            <person name="Pavesi G."/>
            <person name="Pesole G."/>
            <person name="Petrovsky N."/>
            <person name="Piazza S."/>
            <person name="Reed J."/>
            <person name="Reid J.F."/>
            <person name="Ring B.Z."/>
            <person name="Ringwald M."/>
            <person name="Rost B."/>
            <person name="Ruan Y."/>
            <person name="Salzberg S.L."/>
            <person name="Sandelin A."/>
            <person name="Schneider C."/>
            <person name="Schoenbach C."/>
            <person name="Sekiguchi K."/>
            <person name="Semple C.A."/>
            <person name="Seno S."/>
            <person name="Sessa L."/>
            <person name="Sheng Y."/>
            <person name="Shibata Y."/>
            <person name="Shimada H."/>
            <person name="Shimada K."/>
            <person name="Silva D."/>
            <person name="Sinclair B."/>
            <person name="Sperling S."/>
            <person name="Stupka E."/>
            <person name="Sugiura K."/>
            <person name="Sultana R."/>
            <person name="Takenaka Y."/>
            <person name="Taki K."/>
            <person name="Tammoja K."/>
            <person name="Tan S.L."/>
            <person name="Tang S."/>
            <person name="Taylor M.S."/>
            <person name="Tegner J."/>
            <person name="Teichmann S.A."/>
            <person name="Ueda H.R."/>
            <person name="van Nimwegen E."/>
            <person name="Verardo R."/>
            <person name="Wei C.L."/>
            <person name="Yagi K."/>
            <person name="Yamanishi H."/>
            <person name="Zabarovsky E."/>
            <person name="Zhu S."/>
            <person name="Zimmer A."/>
            <person name="Hide W."/>
            <person name="Bult C."/>
            <person name="Grimmond S.M."/>
            <person name="Teasdale R.D."/>
            <person name="Liu E.T."/>
            <person name="Brusic V."/>
            <person name="Quackenbush J."/>
            <person name="Wahlestedt C."/>
            <person name="Mattick J.S."/>
            <person name="Hume D.A."/>
            <person name="Kai C."/>
            <person name="Sasaki D."/>
            <person name="Tomaru Y."/>
            <person name="Fukuda S."/>
            <person name="Kanamori-Katayama M."/>
            <person name="Suzuki M."/>
            <person name="Aoki J."/>
            <person name="Arakawa T."/>
            <person name="Iida J."/>
            <person name="Imamura K."/>
            <person name="Itoh M."/>
            <person name="Kato T."/>
            <person name="Kawaji H."/>
            <person name="Kawagashira N."/>
            <person name="Kawashima T."/>
            <person name="Kojima M."/>
            <person name="Kondo S."/>
            <person name="Konno H."/>
            <person name="Nakano K."/>
            <person name="Ninomiya N."/>
            <person name="Nishio T."/>
            <person name="Okada M."/>
            <person name="Plessy C."/>
            <person name="Shibata K."/>
            <person name="Shiraki T."/>
            <person name="Suzuki S."/>
            <person name="Tagami M."/>
            <person name="Waki K."/>
            <person name="Watahiki A."/>
            <person name="Okamura-Oho Y."/>
            <person name="Suzuki H."/>
            <person name="Kawai J."/>
            <person name="Hayashizaki Y."/>
        </authorList>
    </citation>
    <scope>NUCLEOTIDE SEQUENCE [LARGE SCALE MRNA] OF 887-1217</scope>
    <source>
        <strain>C57BL/6J</strain>
        <tissue>Testis</tissue>
    </source>
</reference>
<reference key="5">
    <citation type="journal article" date="2001" name="Nat. Cell Biol.">
        <title>Mammalian STAG3 is a cohesin specific to sister chromatid arms in meiosis I.</title>
        <authorList>
            <person name="Prieto I."/>
            <person name="Suja J.A."/>
            <person name="Pezzi N."/>
            <person name="Kremer L."/>
            <person name="Martinez-A C."/>
            <person name="Rufas J.S."/>
            <person name="Barbero J.L."/>
        </authorList>
    </citation>
    <scope>INTERACTION WITH STAG3</scope>
</reference>
<reference key="6">
    <citation type="journal article" date="2001" name="Mol. Cell. Biol.">
        <title>Novel meiosis-specific isoform of mammalian SMC1.</title>
        <authorList>
            <person name="Revenkova E."/>
            <person name="Eijpe M."/>
            <person name="Heyting C."/>
            <person name="Gross B."/>
            <person name="Jessberger R."/>
        </authorList>
    </citation>
    <scope>INTERACTION WITH SMC1B</scope>
</reference>
<reference key="7">
    <citation type="journal article" date="2004" name="Rapid Commun. Mass Spectrom.">
        <title>Phosphoproteome analysis of mouse liver using immobilized metal affinity purification and linear ion trap mass spectrometry.</title>
        <authorList>
            <person name="Jin W.-H."/>
            <person name="Dai J."/>
            <person name="Zhou H."/>
            <person name="Xia Q.-C."/>
            <person name="Zou H.-F."/>
            <person name="Zeng R."/>
        </authorList>
    </citation>
    <scope>PHOSPHORYLATION AT SER-1013</scope>
</reference>
<reference key="8">
    <citation type="journal article" date="2007" name="Science">
        <title>ATM and ATR substrate analysis reveals extensive protein networks responsive to DNA damage.</title>
        <authorList>
            <person name="Matsuoka S."/>
            <person name="Ballif B.A."/>
            <person name="Smogorzewska A."/>
            <person name="McDonald E.R. III"/>
            <person name="Hurov K.E."/>
            <person name="Luo J."/>
            <person name="Bakalarski C.E."/>
            <person name="Zhao Z."/>
            <person name="Solimini N."/>
            <person name="Lerenthal Y."/>
            <person name="Shiloh Y."/>
            <person name="Gygi S.P."/>
            <person name="Elledge S.J."/>
        </authorList>
    </citation>
    <scope>PHOSPHORYLATION [LARGE SCALE ANALYSIS] AT SER-787</scope>
    <scope>IDENTIFICATION BY MASS SPECTROMETRY [LARGE SCALE ANALYSIS]</scope>
    <source>
        <tissue>Embryonic fibroblast</tissue>
    </source>
</reference>
<reference key="9">
    <citation type="journal article" date="2010" name="Cell">
        <title>A tissue-specific atlas of mouse protein phosphorylation and expression.</title>
        <authorList>
            <person name="Huttlin E.L."/>
            <person name="Jedrychowski M.P."/>
            <person name="Elias J.E."/>
            <person name="Goswami T."/>
            <person name="Rad R."/>
            <person name="Beausoleil S.A."/>
            <person name="Villen J."/>
            <person name="Haas W."/>
            <person name="Sowa M.E."/>
            <person name="Gygi S.P."/>
        </authorList>
    </citation>
    <scope>PHOSPHORYLATION [LARGE SCALE ANALYSIS] AT SER-1067</scope>
    <scope>IDENTIFICATION BY MASS SPECTROMETRY [LARGE SCALE ANALYSIS]</scope>
    <source>
        <tissue>Brain</tissue>
        <tissue>Brown adipose tissue</tissue>
        <tissue>Heart</tissue>
        <tissue>Kidney</tissue>
        <tissue>Liver</tissue>
        <tissue>Lung</tissue>
        <tissue>Pancreas</tissue>
        <tissue>Spleen</tissue>
        <tissue>Testis</tissue>
    </source>
</reference>
<reference key="10">
    <citation type="journal article" date="2012" name="PLoS Genet.">
        <title>Phosphorylation of chromosome core components may serve as axis marks for the status of chromosomal events during mammalian meiosis.</title>
        <authorList>
            <person name="Fukuda T."/>
            <person name="Pratto F."/>
            <person name="Schimenti J.C."/>
            <person name="Turner J.M."/>
            <person name="Camerini-Otero R.D."/>
            <person name="Hoeoeg C."/>
        </authorList>
    </citation>
    <scope>SUBCELLULAR LOCATION</scope>
    <scope>PHOSPHORYLATION AT SER-1083</scope>
</reference>
<reference key="11">
    <citation type="journal article" date="2013" name="Mol. Cell">
        <title>SIRT5-mediated lysine desuccinylation impacts diverse metabolic pathways.</title>
        <authorList>
            <person name="Park J."/>
            <person name="Chen Y."/>
            <person name="Tishkoff D.X."/>
            <person name="Peng C."/>
            <person name="Tan M."/>
            <person name="Dai L."/>
            <person name="Xie Z."/>
            <person name="Zhang Y."/>
            <person name="Zwaans B.M."/>
            <person name="Skinner M.E."/>
            <person name="Lombard D.B."/>
            <person name="Zhao Y."/>
        </authorList>
    </citation>
    <scope>ACETYLATION [LARGE SCALE ANALYSIS] AT LYS-105 AND LYS-106</scope>
    <scope>IDENTIFICATION BY MASS SPECTROMETRY [LARGE SCALE ANALYSIS]</scope>
    <source>
        <tissue>Embryonic fibroblast</tissue>
    </source>
</reference>
<reference key="12">
    <citation type="journal article" date="2014" name="Chromosoma">
        <title>Localisation of the SMC loading complex Nipbl/Mau2 during mammalian meiotic prophase I.</title>
        <authorList>
            <person name="Visnes T."/>
            <person name="Giordano F."/>
            <person name="Kuznetsova A."/>
            <person name="Suja J.A."/>
            <person name="Lander A.D."/>
            <person name="Calof A.L."/>
            <person name="Stroem L."/>
        </authorList>
    </citation>
    <scope>SUBCELLULAR LOCATION</scope>
    <scope>TISSUE SPECIFICITY</scope>
</reference>
<protein>
    <recommendedName>
        <fullName>Structural maintenance of chromosomes protein 3</fullName>
        <shortName>SMC protein 3</shortName>
        <shortName>SMC-3</shortName>
    </recommendedName>
    <alternativeName>
        <fullName>Basement membrane-associated chondroitin proteoglycan</fullName>
        <shortName>Bamacan</shortName>
    </alternativeName>
    <alternativeName>
        <fullName>Chondroitin sulfate proteoglycan 6</fullName>
    </alternativeName>
    <alternativeName>
        <fullName>Chromosome segregation protein SmcD</fullName>
    </alternativeName>
    <alternativeName>
        <fullName>Mad member-interacting protein 1</fullName>
    </alternativeName>
</protein>
<comment type="function">
    <text evidence="7">Central component of cohesin, a complex required for chromosome cohesion during the cell cycle. The cohesin complex may form a large proteinaceous ring within which sister chromatids can be trapped. At anaphase, the complex is cleaved and dissociates from chromatin, allowing sister chromatids to segregate. Cohesion is coupled to DNA replication and is involved in DNA repair. The cohesin complex also plays an important role in spindle pole assembly during mitosis and in chromosomes movement.</text>
</comment>
<comment type="subunit">
    <text evidence="2 3 8 9 13">Forms a heterodimer with SMC1A or SMC1B in cohesin complexes (PubMed:11564881). Cohesin complexes are composed of the SMC1 (SMC1A or SMC1B) and SMC3 heterodimer attached via their SMC hinge domain, RAD21 which link them, and one STAG protein (STAG1, STAG2 or STAG3), which interacts with RAD21. Also found in meiosis-specific cohesin complexes. Found in a complex with SMC1A, CDCA5 and RAD21, PDS5A/SCC-112 and PDS5B/APRIN. Interacts with PDS5A and WAPL; regulated by SMC3 acetylation. Interacts with NUMA1, and forms a ternary complex with KIF3B and KIFAP3, suggesting a function in tethering the chromosomes to the spindle pole and a function in chromosome movement. Interacts with SYCP2 and RPGR. Interacts (via SMC hinge domain) with KIAA1328 (via N- and C-terminal domains). Interacts with DDX11. The cohesin complex interacts with the cohesin loading complex subunits NIPBL/Scc2 (via HEAT repeats) and MAU2/Scc4. NIPBL directly contacts all members of the complex, RAD21, SMC1A/B, SMC3 and STAG1 (By similarity). Interacts with MXI1, MXD3 and MXD4 (PubMed:9528857). Interacts with STAG3 (PubMed:11483963). Interacts with the NuRD complex component HDAC2; the interaction is direct (By similarity).</text>
</comment>
<comment type="interaction">
    <interactant intactId="EBI-2550068">
        <id>Q9CW03</id>
    </interactant>
    <interactant intactId="EBI-1188816">
        <id>Q9Z2D6</id>
        <label>Mecp2</label>
    </interactant>
    <organismsDiffer>false</organismsDiffer>
    <experiments>3</experiments>
</comment>
<comment type="subcellular location">
    <subcellularLocation>
        <location evidence="11">Nucleus</location>
    </subcellularLocation>
    <subcellularLocation>
        <location evidence="11 12">Chromosome</location>
    </subcellularLocation>
    <subcellularLocation>
        <location evidence="11">Chromosome</location>
        <location evidence="11">Centromere</location>
    </subcellularLocation>
    <text>Associates with chromatin. Before prophase it is scattered along chromosome arms. During prophase, most of cohesin complexes dissociate from chromatin probably because of phosphorylation by PLK, except at centromeres, where cohesin complexes remain. At anaphase, the RAD21 subunit of the cohesin complex is cleaved, leading to the dissociation of the complex from chromosomes, allowing chromosome separation. The phosphorylated form at Ser-1083 is preferentially associated with unsynapsed chromosomal regions.</text>
</comment>
<comment type="tissue specificity">
    <text evidence="6 12">Spermatocytes (at protein level). Widely expressed, with higher expression in testis and brain.</text>
</comment>
<comment type="domain">
    <text evidence="1">The flexible SMC hinge domain, which separates the large intramolecular coiled coil regions, allows the heterotypic interaction with the corresponding domain of SMC1A or SMC1B, forming a V-shaped heterodimer. The two heads of the heterodimer are then connected by different ends of the cleavable RAD21 protein, forming a ring structure (By similarity).</text>
</comment>
<comment type="PTM">
    <text evidence="10 11">Phosphorylated at Ser-1083 in a SPO11-dependent manner.</text>
</comment>
<comment type="PTM">
    <text evidence="3">Acetylation at Lys-105 and Lys-106 by ESCO1 is important for genome stability and S phase sister chromatid cohesion. Regulated by DSCC1, it is required for processive DNA synthesis, coupling sister chromatid cohesion establishment during S phase to DNA replication (By similarity). Deacetylation by HDAC8, regulates release of the cohesin complex from chromatin (By similarity).</text>
</comment>
<comment type="PTM">
    <text evidence="3">Ubiquitinated by the DCX(DCAF15) complex, leading to its degradation.</text>
</comment>
<comment type="similarity">
    <text evidence="14">Belongs to the SMC family. SMC3 subfamily.</text>
</comment>
<comment type="caution">
    <text evidence="14">Was originally isolated as a proteoglycan protein (explaining its name). Although not excluded, such secreted function is not clear.</text>
</comment>
<comment type="sequence caution" evidence="14">
    <conflict type="frameshift">
        <sequence resource="EMBL-CDS" id="CAA75400"/>
    </conflict>
</comment>
<keyword id="KW-0002">3D-structure</keyword>
<keyword id="KW-0007">Acetylation</keyword>
<keyword id="KW-0067">ATP-binding</keyword>
<keyword id="KW-0131">Cell cycle</keyword>
<keyword id="KW-0132">Cell division</keyword>
<keyword id="KW-0137">Centromere</keyword>
<keyword id="KW-0158">Chromosome</keyword>
<keyword id="KW-0175">Coiled coil</keyword>
<keyword id="KW-0227">DNA damage</keyword>
<keyword id="KW-0234">DNA repair</keyword>
<keyword id="KW-0469">Meiosis</keyword>
<keyword id="KW-0498">Mitosis</keyword>
<keyword id="KW-0547">Nucleotide-binding</keyword>
<keyword id="KW-0539">Nucleus</keyword>
<keyword id="KW-0597">Phosphoprotein</keyword>
<keyword id="KW-1185">Reference proteome</keyword>
<keyword id="KW-0832">Ubl conjugation</keyword>
<organism>
    <name type="scientific">Mus musculus</name>
    <name type="common">Mouse</name>
    <dbReference type="NCBI Taxonomy" id="10090"/>
    <lineage>
        <taxon>Eukaryota</taxon>
        <taxon>Metazoa</taxon>
        <taxon>Chordata</taxon>
        <taxon>Craniata</taxon>
        <taxon>Vertebrata</taxon>
        <taxon>Euteleostomi</taxon>
        <taxon>Mammalia</taxon>
        <taxon>Eutheria</taxon>
        <taxon>Euarchontoglires</taxon>
        <taxon>Glires</taxon>
        <taxon>Rodentia</taxon>
        <taxon>Myomorpha</taxon>
        <taxon>Muroidea</taxon>
        <taxon>Muridae</taxon>
        <taxon>Murinae</taxon>
        <taxon>Mus</taxon>
        <taxon>Mus</taxon>
    </lineage>
</organism>
<dbReference type="EMBL" id="AF141294">
    <property type="protein sequence ID" value="AAD42073.1"/>
    <property type="molecule type" value="mRNA"/>
</dbReference>
<dbReference type="EMBL" id="AF047601">
    <property type="protein sequence ID" value="AAD27754.1"/>
    <property type="molecule type" value="mRNA"/>
</dbReference>
<dbReference type="EMBL" id="Y15128">
    <property type="protein sequence ID" value="CAA75400.1"/>
    <property type="status" value="ALT_FRAME"/>
    <property type="molecule type" value="mRNA"/>
</dbReference>
<dbReference type="EMBL" id="AK005647">
    <property type="protein sequence ID" value="BAB24167.1"/>
    <property type="molecule type" value="mRNA"/>
</dbReference>
<dbReference type="CCDS" id="CCDS38025.1"/>
<dbReference type="RefSeq" id="NP_031816.2">
    <property type="nucleotide sequence ID" value="NM_007790.3"/>
</dbReference>
<dbReference type="PDB" id="2WD5">
    <property type="method" value="X-ray"/>
    <property type="resolution" value="2.70 A"/>
    <property type="chains" value="B=484-696"/>
</dbReference>
<dbReference type="PDB" id="7DG5">
    <property type="method" value="X-ray"/>
    <property type="resolution" value="2.00 A"/>
    <property type="chains" value="B/D=484-696"/>
</dbReference>
<dbReference type="PDBsum" id="2WD5"/>
<dbReference type="PDBsum" id="7DG5"/>
<dbReference type="SMR" id="Q9CW03"/>
<dbReference type="BioGRID" id="198951">
    <property type="interactions" value="59"/>
</dbReference>
<dbReference type="CORUM" id="Q9CW03"/>
<dbReference type="DIP" id="DIP-57028N"/>
<dbReference type="FunCoup" id="Q9CW03">
    <property type="interactions" value="4217"/>
</dbReference>
<dbReference type="IntAct" id="Q9CW03">
    <property type="interactions" value="51"/>
</dbReference>
<dbReference type="MINT" id="Q9CW03"/>
<dbReference type="STRING" id="10090.ENSMUSP00000025930"/>
<dbReference type="MoonProt" id="Q9CW03"/>
<dbReference type="GlyGen" id="Q9CW03">
    <property type="glycosylation" value="1 site, 1 O-linked glycan (1 site)"/>
</dbReference>
<dbReference type="iPTMnet" id="Q9CW03"/>
<dbReference type="PhosphoSitePlus" id="Q9CW03"/>
<dbReference type="SwissPalm" id="Q9CW03"/>
<dbReference type="jPOST" id="Q9CW03"/>
<dbReference type="PaxDb" id="10090-ENSMUSP00000025930"/>
<dbReference type="ProteomicsDB" id="257264"/>
<dbReference type="Pumba" id="Q9CW03"/>
<dbReference type="Antibodypedia" id="18357">
    <property type="antibodies" value="359 antibodies from 39 providers"/>
</dbReference>
<dbReference type="DNASU" id="13006"/>
<dbReference type="Ensembl" id="ENSMUST00000025930.10">
    <property type="protein sequence ID" value="ENSMUSP00000025930.10"/>
    <property type="gene ID" value="ENSMUSG00000024974.11"/>
</dbReference>
<dbReference type="GeneID" id="13006"/>
<dbReference type="KEGG" id="mmu:13006"/>
<dbReference type="UCSC" id="uc008hwy.2">
    <property type="organism name" value="mouse"/>
</dbReference>
<dbReference type="AGR" id="MGI:1339795"/>
<dbReference type="CTD" id="9126"/>
<dbReference type="MGI" id="MGI:1339795">
    <property type="gene designation" value="Smc3"/>
</dbReference>
<dbReference type="VEuPathDB" id="HostDB:ENSMUSG00000024974"/>
<dbReference type="eggNOG" id="KOG0964">
    <property type="taxonomic scope" value="Eukaryota"/>
</dbReference>
<dbReference type="GeneTree" id="ENSGT00580000081628"/>
<dbReference type="HOGENOM" id="CLU_001042_5_0_1"/>
<dbReference type="InParanoid" id="Q9CW03"/>
<dbReference type="OMA" id="GQKTVCA"/>
<dbReference type="OrthoDB" id="431497at2759"/>
<dbReference type="PhylomeDB" id="Q9CW03"/>
<dbReference type="TreeFam" id="TF105602"/>
<dbReference type="Reactome" id="R-MMU-2467813">
    <property type="pathway name" value="Separation of Sister Chromatids"/>
</dbReference>
<dbReference type="Reactome" id="R-MMU-2468052">
    <property type="pathway name" value="Establishment of Sister Chromatid Cohesion"/>
</dbReference>
<dbReference type="Reactome" id="R-MMU-2470946">
    <property type="pathway name" value="Cohesin Loading onto Chromatin"/>
</dbReference>
<dbReference type="Reactome" id="R-MMU-2500257">
    <property type="pathway name" value="Resolution of Sister Chromatid Cohesion"/>
</dbReference>
<dbReference type="Reactome" id="R-MMU-3108214">
    <property type="pathway name" value="SUMOylation of DNA damage response and repair proteins"/>
</dbReference>
<dbReference type="BioGRID-ORCS" id="13006">
    <property type="hits" value="49 hits in 118 CRISPR screens"/>
</dbReference>
<dbReference type="ChiTaRS" id="Smc3">
    <property type="organism name" value="mouse"/>
</dbReference>
<dbReference type="EvolutionaryTrace" id="Q9CW03"/>
<dbReference type="PRO" id="PR:Q9CW03"/>
<dbReference type="Proteomes" id="UP000000589">
    <property type="component" value="Chromosome 19"/>
</dbReference>
<dbReference type="RNAct" id="Q9CW03">
    <property type="molecule type" value="protein"/>
</dbReference>
<dbReference type="Bgee" id="ENSMUSG00000024974">
    <property type="expression patterns" value="Expressed in undifferentiated genital tubercle and 256 other cell types or tissues"/>
</dbReference>
<dbReference type="ExpressionAtlas" id="Q9CW03">
    <property type="expression patterns" value="baseline and differential"/>
</dbReference>
<dbReference type="GO" id="GO:0000785">
    <property type="term" value="C:chromatin"/>
    <property type="evidence" value="ECO:0000250"/>
    <property type="project" value="UniProtKB"/>
</dbReference>
<dbReference type="GO" id="GO:0000775">
    <property type="term" value="C:chromosome, centromeric region"/>
    <property type="evidence" value="ECO:0007669"/>
    <property type="project" value="UniProtKB-SubCell"/>
</dbReference>
<dbReference type="GO" id="GO:0008278">
    <property type="term" value="C:cohesin complex"/>
    <property type="evidence" value="ECO:0000314"/>
    <property type="project" value="CAFA"/>
</dbReference>
<dbReference type="GO" id="GO:0000800">
    <property type="term" value="C:lateral element"/>
    <property type="evidence" value="ECO:0000314"/>
    <property type="project" value="MGI"/>
</dbReference>
<dbReference type="GO" id="GO:0030893">
    <property type="term" value="C:meiotic cohesin complex"/>
    <property type="evidence" value="ECO:0000314"/>
    <property type="project" value="UniProtKB"/>
</dbReference>
<dbReference type="GO" id="GO:0030892">
    <property type="term" value="C:mitotic cohesin complex"/>
    <property type="evidence" value="ECO:0007669"/>
    <property type="project" value="Ensembl"/>
</dbReference>
<dbReference type="GO" id="GO:0097431">
    <property type="term" value="C:mitotic spindle pole"/>
    <property type="evidence" value="ECO:0000250"/>
    <property type="project" value="UniProtKB"/>
</dbReference>
<dbReference type="GO" id="GO:0016363">
    <property type="term" value="C:nuclear matrix"/>
    <property type="evidence" value="ECO:0000250"/>
    <property type="project" value="UniProtKB"/>
</dbReference>
<dbReference type="GO" id="GO:0005654">
    <property type="term" value="C:nucleoplasm"/>
    <property type="evidence" value="ECO:0000304"/>
    <property type="project" value="Reactome"/>
</dbReference>
<dbReference type="GO" id="GO:0005634">
    <property type="term" value="C:nucleus"/>
    <property type="evidence" value="ECO:0000314"/>
    <property type="project" value="CAFA"/>
</dbReference>
<dbReference type="GO" id="GO:0005524">
    <property type="term" value="F:ATP binding"/>
    <property type="evidence" value="ECO:0007669"/>
    <property type="project" value="UniProtKB-KW"/>
</dbReference>
<dbReference type="GO" id="GO:0016887">
    <property type="term" value="F:ATP hydrolysis activity"/>
    <property type="evidence" value="ECO:0007669"/>
    <property type="project" value="InterPro"/>
</dbReference>
<dbReference type="GO" id="GO:0048487">
    <property type="term" value="F:beta-tubulin binding"/>
    <property type="evidence" value="ECO:0007669"/>
    <property type="project" value="Ensembl"/>
</dbReference>
<dbReference type="GO" id="GO:0003682">
    <property type="term" value="F:chromatin binding"/>
    <property type="evidence" value="ECO:0000314"/>
    <property type="project" value="MGI"/>
</dbReference>
<dbReference type="GO" id="GO:0000987">
    <property type="term" value="F:cis-regulatory region sequence-specific DNA binding"/>
    <property type="evidence" value="ECO:0000314"/>
    <property type="project" value="MGI"/>
</dbReference>
<dbReference type="GO" id="GO:0070840">
    <property type="term" value="F:dynein complex binding"/>
    <property type="evidence" value="ECO:0000250"/>
    <property type="project" value="UniProtKB"/>
</dbReference>
<dbReference type="GO" id="GO:0036033">
    <property type="term" value="F:mediator complex binding"/>
    <property type="evidence" value="ECO:0000314"/>
    <property type="project" value="MGI"/>
</dbReference>
<dbReference type="GO" id="GO:0046982">
    <property type="term" value="F:protein heterodimerization activity"/>
    <property type="evidence" value="ECO:0007669"/>
    <property type="project" value="Ensembl"/>
</dbReference>
<dbReference type="GO" id="GO:0051301">
    <property type="term" value="P:cell division"/>
    <property type="evidence" value="ECO:0007669"/>
    <property type="project" value="UniProtKB-KW"/>
</dbReference>
<dbReference type="GO" id="GO:0006281">
    <property type="term" value="P:DNA repair"/>
    <property type="evidence" value="ECO:0007669"/>
    <property type="project" value="UniProtKB-KW"/>
</dbReference>
<dbReference type="GO" id="GO:0051321">
    <property type="term" value="P:meiotic cell cycle"/>
    <property type="evidence" value="ECO:0000353"/>
    <property type="project" value="MGI"/>
</dbReference>
<dbReference type="GO" id="GO:0090307">
    <property type="term" value="P:mitotic spindle assembly"/>
    <property type="evidence" value="ECO:0007669"/>
    <property type="project" value="Ensembl"/>
</dbReference>
<dbReference type="GO" id="GO:0006275">
    <property type="term" value="P:regulation of DNA replication"/>
    <property type="evidence" value="ECO:0000250"/>
    <property type="project" value="UniProtKB"/>
</dbReference>
<dbReference type="GO" id="GO:0007062">
    <property type="term" value="P:sister chromatid cohesion"/>
    <property type="evidence" value="ECO:0007669"/>
    <property type="project" value="Ensembl"/>
</dbReference>
<dbReference type="GO" id="GO:0019827">
    <property type="term" value="P:stem cell population maintenance"/>
    <property type="evidence" value="ECO:0000315"/>
    <property type="project" value="MGI"/>
</dbReference>
<dbReference type="CDD" id="cd03272">
    <property type="entry name" value="ABC_SMC3_euk"/>
    <property type="match status" value="1"/>
</dbReference>
<dbReference type="FunFam" id="1.20.1060.20:FF:000002">
    <property type="entry name" value="Structural maintenance of chromosomes 3"/>
    <property type="match status" value="1"/>
</dbReference>
<dbReference type="FunFam" id="3.30.70.1620:FF:000002">
    <property type="entry name" value="Structural maintenance of chromosomes 3"/>
    <property type="match status" value="1"/>
</dbReference>
<dbReference type="FunFam" id="3.40.50.300:FF:000370">
    <property type="entry name" value="Structural maintenance of chromosomes 3"/>
    <property type="match status" value="1"/>
</dbReference>
<dbReference type="FunFam" id="3.40.50.300:FF:000424">
    <property type="entry name" value="Structural maintenance of chromosomes 3"/>
    <property type="match status" value="1"/>
</dbReference>
<dbReference type="Gene3D" id="1.10.287.1490">
    <property type="match status" value="1"/>
</dbReference>
<dbReference type="Gene3D" id="1.20.1060.20">
    <property type="match status" value="1"/>
</dbReference>
<dbReference type="Gene3D" id="3.30.70.1620">
    <property type="match status" value="1"/>
</dbReference>
<dbReference type="Gene3D" id="3.40.50.300">
    <property type="entry name" value="P-loop containing nucleotide triphosphate hydrolases"/>
    <property type="match status" value="2"/>
</dbReference>
<dbReference type="InterPro" id="IPR027417">
    <property type="entry name" value="P-loop_NTPase"/>
</dbReference>
<dbReference type="InterPro" id="IPR003395">
    <property type="entry name" value="RecF/RecN/SMC_N"/>
</dbReference>
<dbReference type="InterPro" id="IPR024704">
    <property type="entry name" value="SMC"/>
</dbReference>
<dbReference type="InterPro" id="IPR041741">
    <property type="entry name" value="SMC3_ABC_euk"/>
</dbReference>
<dbReference type="InterPro" id="IPR010935">
    <property type="entry name" value="SMC_hinge"/>
</dbReference>
<dbReference type="InterPro" id="IPR036277">
    <property type="entry name" value="SMC_hinge_sf"/>
</dbReference>
<dbReference type="PANTHER" id="PTHR43977">
    <property type="entry name" value="STRUCTURAL MAINTENANCE OF CHROMOSOMES PROTEIN 3"/>
    <property type="match status" value="1"/>
</dbReference>
<dbReference type="Pfam" id="PF06470">
    <property type="entry name" value="SMC_hinge"/>
    <property type="match status" value="1"/>
</dbReference>
<dbReference type="Pfam" id="PF02463">
    <property type="entry name" value="SMC_N"/>
    <property type="match status" value="1"/>
</dbReference>
<dbReference type="PIRSF" id="PIRSF005719">
    <property type="entry name" value="SMC"/>
    <property type="match status" value="1"/>
</dbReference>
<dbReference type="SMART" id="SM00968">
    <property type="entry name" value="SMC_hinge"/>
    <property type="match status" value="1"/>
</dbReference>
<dbReference type="SUPFAM" id="SSF52540">
    <property type="entry name" value="P-loop containing nucleoside triphosphate hydrolases"/>
    <property type="match status" value="1"/>
</dbReference>
<dbReference type="SUPFAM" id="SSF75553">
    <property type="entry name" value="Smc hinge domain"/>
    <property type="match status" value="1"/>
</dbReference>
<evidence type="ECO:0000250" key="1"/>
<evidence type="ECO:0000250" key="2">
    <source>
        <dbReference type="UniProtKB" id="P97690"/>
    </source>
</evidence>
<evidence type="ECO:0000250" key="3">
    <source>
        <dbReference type="UniProtKB" id="Q9UQE7"/>
    </source>
</evidence>
<evidence type="ECO:0000255" key="4"/>
<evidence type="ECO:0000256" key="5">
    <source>
        <dbReference type="SAM" id="MobiDB-lite"/>
    </source>
</evidence>
<evidence type="ECO:0000269" key="6">
    <source>
    </source>
</evidence>
<evidence type="ECO:0000269" key="7">
    <source>
    </source>
</evidence>
<evidence type="ECO:0000269" key="8">
    <source>
    </source>
</evidence>
<evidence type="ECO:0000269" key="9">
    <source>
    </source>
</evidence>
<evidence type="ECO:0000269" key="10">
    <source>
    </source>
</evidence>
<evidence type="ECO:0000269" key="11">
    <source>
    </source>
</evidence>
<evidence type="ECO:0000269" key="12">
    <source>
    </source>
</evidence>
<evidence type="ECO:0000269" key="13">
    <source>
    </source>
</evidence>
<evidence type="ECO:0000305" key="14"/>
<evidence type="ECO:0007744" key="15">
    <source>
    </source>
</evidence>
<evidence type="ECO:0007744" key="16">
    <source>
    </source>
</evidence>
<evidence type="ECO:0007744" key="17">
    <source>
    </source>
</evidence>
<evidence type="ECO:0007829" key="18">
    <source>
        <dbReference type="PDB" id="2WD5"/>
    </source>
</evidence>
<evidence type="ECO:0007829" key="19">
    <source>
        <dbReference type="PDB" id="7DG5"/>
    </source>
</evidence>
<accession>Q9CW03</accession>
<accession>O35667</accession>
<accession>Q9QUS3</accession>
<gene>
    <name type="primary">Smc3</name>
    <name type="synonym">Bam</name>
    <name type="synonym">Bmh</name>
    <name type="synonym">Cspg6</name>
    <name type="synonym">Mmip1</name>
    <name type="synonym">Smc3l1</name>
    <name type="synonym">Smcd</name>
</gene>